<sequence length="300" mass="33358">MDVLRTPDSRFEHLVGYPFAPHYVDVTAGDTQPLRMHYVDEGPGDGPPIVLLHGEPTWSYLYRTMIPPLSAAGHRVLAPDLIGFGRSDKPTRIEDYTYLRHVEWVTSWFENLDLHDVTLFVQDWGSLIGLRIAAEHGDRIARLVVANGFLPAAQGRTPLPFYVWRAFARYSPVLPAGRLVNFGTVHRVPAGVRAGYDAPFPDKTYQAGARAFPRLVPTSPDDPAVPANRAAWEALGRWDKPFLAIFGYRDPILGQADGPLIKHIPGAAGQPHARIKASHFIQEDSGTELAERMLSWQQAT</sequence>
<proteinExistence type="inferred from homology"/>
<feature type="chain" id="PRO_0000427252" description="Haloalkane dehalogenase 1">
    <location>
        <begin position="1"/>
        <end position="300"/>
    </location>
</feature>
<feature type="domain" description="AB hydrolase-1" evidence="2">
    <location>
        <begin position="47"/>
        <end position="176"/>
    </location>
</feature>
<feature type="active site" description="Nucleophile" evidence="1">
    <location>
        <position position="123"/>
    </location>
</feature>
<feature type="active site" description="Proton donor" evidence="1">
    <location>
        <position position="250"/>
    </location>
</feature>
<feature type="active site" description="Proton acceptor" evidence="1">
    <location>
        <position position="279"/>
    </location>
</feature>
<keyword id="KW-0378">Hydrolase</keyword>
<keyword id="KW-1185">Reference proteome</keyword>
<evidence type="ECO:0000250" key="1"/>
<evidence type="ECO:0000255" key="2"/>
<evidence type="ECO:0000305" key="3"/>
<reference key="1">
    <citation type="journal article" date="2002" name="J. Bacteriol.">
        <title>Whole-genome comparison of Mycobacterium tuberculosis clinical and laboratory strains.</title>
        <authorList>
            <person name="Fleischmann R.D."/>
            <person name="Alland D."/>
            <person name="Eisen J.A."/>
            <person name="Carpenter L."/>
            <person name="White O."/>
            <person name="Peterson J.D."/>
            <person name="DeBoy R.T."/>
            <person name="Dodson R.J."/>
            <person name="Gwinn M.L."/>
            <person name="Haft D.H."/>
            <person name="Hickey E.K."/>
            <person name="Kolonay J.F."/>
            <person name="Nelson W.C."/>
            <person name="Umayam L.A."/>
            <person name="Ermolaeva M.D."/>
            <person name="Salzberg S.L."/>
            <person name="Delcher A."/>
            <person name="Utterback T.R."/>
            <person name="Weidman J.F."/>
            <person name="Khouri H.M."/>
            <person name="Gill J."/>
            <person name="Mikula A."/>
            <person name="Bishai W."/>
            <person name="Jacobs W.R. Jr."/>
            <person name="Venter J.C."/>
            <person name="Fraser C.M."/>
        </authorList>
    </citation>
    <scope>NUCLEOTIDE SEQUENCE [LARGE SCALE GENOMIC DNA]</scope>
    <source>
        <strain>CDC 1551 / Oshkosh</strain>
    </source>
</reference>
<gene>
    <name type="primary">dhmA1</name>
    <name type="ordered locus">MT2353</name>
</gene>
<organism>
    <name type="scientific">Mycobacterium tuberculosis (strain CDC 1551 / Oshkosh)</name>
    <dbReference type="NCBI Taxonomy" id="83331"/>
    <lineage>
        <taxon>Bacteria</taxon>
        <taxon>Bacillati</taxon>
        <taxon>Actinomycetota</taxon>
        <taxon>Actinomycetes</taxon>
        <taxon>Mycobacteriales</taxon>
        <taxon>Mycobacteriaceae</taxon>
        <taxon>Mycobacterium</taxon>
        <taxon>Mycobacterium tuberculosis complex</taxon>
    </lineage>
</organism>
<accession>P9WMS2</accession>
<accession>L0TAS4</accession>
<accession>P64301</accession>
<accession>Q50670</accession>
<comment type="function">
    <text evidence="1">Catalyzes hydrolytic cleavage of carbon-halogen bonds in halogenated aliphatic compounds, leading to the formation of the corresponding primary alcohols, halide ions and protons.</text>
</comment>
<comment type="catalytic activity">
    <reaction>
        <text>1-haloalkane + H2O = a halide anion + a primary alcohol + H(+)</text>
        <dbReference type="Rhea" id="RHEA:19081"/>
        <dbReference type="ChEBI" id="CHEBI:15377"/>
        <dbReference type="ChEBI" id="CHEBI:15378"/>
        <dbReference type="ChEBI" id="CHEBI:15734"/>
        <dbReference type="ChEBI" id="CHEBI:16042"/>
        <dbReference type="ChEBI" id="CHEBI:18060"/>
        <dbReference type="EC" id="3.8.1.5"/>
    </reaction>
</comment>
<comment type="subunit">
    <text evidence="1">Monomer.</text>
</comment>
<comment type="similarity">
    <text evidence="3">Belongs to the haloalkane dehalogenase family. Type 1 subfamily.</text>
</comment>
<name>DHMA1_MYCTO</name>
<dbReference type="EC" id="3.8.1.5"/>
<dbReference type="EMBL" id="AE000516">
    <property type="protein sequence ID" value="AAK46638.1"/>
    <property type="molecule type" value="Genomic_DNA"/>
</dbReference>
<dbReference type="PIR" id="D70733">
    <property type="entry name" value="D70733"/>
</dbReference>
<dbReference type="RefSeq" id="WP_003411849.1">
    <property type="nucleotide sequence ID" value="NZ_KK341227.1"/>
</dbReference>
<dbReference type="SMR" id="P9WMS2"/>
<dbReference type="ESTHER" id="myctu-RV2296">
    <property type="family name" value="Haloalkane_dehalogenase-HLD1"/>
</dbReference>
<dbReference type="KEGG" id="mtc:MT2353"/>
<dbReference type="PATRIC" id="fig|83331.31.peg.2533"/>
<dbReference type="HOGENOM" id="CLU_020336_13_3_11"/>
<dbReference type="Proteomes" id="UP000001020">
    <property type="component" value="Chromosome"/>
</dbReference>
<dbReference type="GO" id="GO:0004301">
    <property type="term" value="F:epoxide hydrolase activity"/>
    <property type="evidence" value="ECO:0007669"/>
    <property type="project" value="TreeGrafter"/>
</dbReference>
<dbReference type="GO" id="GO:0018786">
    <property type="term" value="F:haloalkane dehalogenase activity"/>
    <property type="evidence" value="ECO:0007669"/>
    <property type="project" value="UniProtKB-UniRule"/>
</dbReference>
<dbReference type="FunFam" id="3.40.50.1820:FF:000325">
    <property type="entry name" value="Haloalkane dehalogenase"/>
    <property type="match status" value="1"/>
</dbReference>
<dbReference type="Gene3D" id="3.40.50.1820">
    <property type="entry name" value="alpha/beta hydrolase"/>
    <property type="match status" value="1"/>
</dbReference>
<dbReference type="HAMAP" id="MF_01230">
    <property type="entry name" value="Haloalk_dehal_type1"/>
    <property type="match status" value="1"/>
</dbReference>
<dbReference type="InterPro" id="IPR000073">
    <property type="entry name" value="AB_hydrolase_1"/>
</dbReference>
<dbReference type="InterPro" id="IPR029058">
    <property type="entry name" value="AB_hydrolase_fold"/>
</dbReference>
<dbReference type="InterPro" id="IPR000639">
    <property type="entry name" value="Epox_hydrolase-like"/>
</dbReference>
<dbReference type="InterPro" id="IPR051340">
    <property type="entry name" value="Haloalkane_dehalogenase"/>
</dbReference>
<dbReference type="InterPro" id="IPR023489">
    <property type="entry name" value="Haloalkane_dehalogenase_1"/>
</dbReference>
<dbReference type="NCBIfam" id="NF002043">
    <property type="entry name" value="PRK00870.1"/>
    <property type="match status" value="1"/>
</dbReference>
<dbReference type="PANTHER" id="PTHR42977:SF3">
    <property type="entry name" value="AB HYDROLASE-1 DOMAIN-CONTAINING PROTEIN"/>
    <property type="match status" value="1"/>
</dbReference>
<dbReference type="PANTHER" id="PTHR42977">
    <property type="entry name" value="HYDROLASE-RELATED"/>
    <property type="match status" value="1"/>
</dbReference>
<dbReference type="Pfam" id="PF00561">
    <property type="entry name" value="Abhydrolase_1"/>
    <property type="match status" value="1"/>
</dbReference>
<dbReference type="PRINTS" id="PR00111">
    <property type="entry name" value="ABHYDROLASE"/>
</dbReference>
<dbReference type="PRINTS" id="PR00412">
    <property type="entry name" value="EPOXHYDRLASE"/>
</dbReference>
<dbReference type="SUPFAM" id="SSF53474">
    <property type="entry name" value="alpha/beta-Hydrolases"/>
    <property type="match status" value="1"/>
</dbReference>
<protein>
    <recommendedName>
        <fullName>Haloalkane dehalogenase 1</fullName>
        <ecNumber>3.8.1.5</ecNumber>
    </recommendedName>
</protein>